<sequence length="768" mass="84038">MKVIGLADSELESSLRKAGIGMSASEARSIASILGRDPTLAELFCYDAMWSEHCSYKSSRAVLREFLPTEGPNVVLGPVEDAGIVSIDDEWCVVISHESHNHPSQILPNEGAATGIGGIVRDVNCMGARVVATADPLRFGDPYGRESSRVRWVAEGVVDGIWQYGNALGVPVIAGDVVFSRCFDYNCLVNVVAIGVVRRDEIIRSRAPPGSGEKGYDVILIGKPTDSSGLGGVIFASDTLREEEEEANRGAVQIPDPFLKNVLFKANEDLFRLVREKGVEIGFKDLGGGGLTCASSEMGAAGGYGMEIDLDRLHVAGEFPPEVLCIAETQERFLIIAPRELRERILKIYNEDWDLPNVYEGARASVIGRVTTHDRYIVRHRGEEVVNVPIKHLTGGIRYERVWRPRIRNLVEPDVRMPEDLNRVMLDMLASPNIASREHIYRYYDTEVQGNTVIRPGEADAGLLAPIRERDFGIALSVDSNPFYGRISPYWGGATAVAEAMRNVAAIGATPSTLTDCLNFGNPEKPEAFWEFRESVRGLADAARNLWLKGHPNQPVPIVSGNVSFYNESPEGAVDPSPVIACVGIMRDISRAITMSLKEAGDGLYLLGPRFDELGGSEYYRLIWGVTGANVPVVRFPLERSMIYTVIDAVDREILRAAHDISNGGMAITAAEMCMLSDHGISIDISDLGDMRSDKLLFSESSGFVVEVADGAEQEFVSIARSYDLNPVRLGSVSTGDIEMARDGKMLVRLDPEEAREAWSSGLREAMR</sequence>
<protein>
    <recommendedName>
        <fullName evidence="1">Phosphoribosylformylglycinamidine synthase subunit PurL</fullName>
        <shortName evidence="1">FGAM synthase</shortName>
        <ecNumber evidence="1">6.3.5.3</ecNumber>
    </recommendedName>
    <alternativeName>
        <fullName evidence="1">Formylglycinamide ribonucleotide amidotransferase subunit II</fullName>
        <shortName evidence="1">FGAR amidotransferase II</shortName>
        <shortName evidence="1">FGAR-AT II</shortName>
    </alternativeName>
    <alternativeName>
        <fullName evidence="1">Glutamine amidotransferase PurL</fullName>
    </alternativeName>
    <alternativeName>
        <fullName evidence="1">Phosphoribosylformylglycinamidine synthase subunit II</fullName>
    </alternativeName>
</protein>
<feature type="chain" id="PRO_1000050322" description="Phosphoribosylformylglycinamidine synthase subunit PurL">
    <location>
        <begin position="1"/>
        <end position="768"/>
    </location>
</feature>
<feature type="active site" evidence="1">
    <location>
        <position position="53"/>
    </location>
</feature>
<feature type="active site" description="Proton acceptor" evidence="1">
    <location>
        <position position="100"/>
    </location>
</feature>
<feature type="binding site" evidence="1">
    <location>
        <position position="56"/>
    </location>
    <ligand>
        <name>ATP</name>
        <dbReference type="ChEBI" id="CHEBI:30616"/>
    </ligand>
</feature>
<feature type="binding site" evidence="1">
    <location>
        <position position="98"/>
    </location>
    <ligand>
        <name>Mg(2+)</name>
        <dbReference type="ChEBI" id="CHEBI:18420"/>
        <label>1</label>
    </ligand>
</feature>
<feature type="binding site" evidence="1">
    <location>
        <begin position="99"/>
        <end position="102"/>
    </location>
    <ligand>
        <name>substrate</name>
    </ligand>
</feature>
<feature type="binding site" evidence="1">
    <location>
        <position position="121"/>
    </location>
    <ligand>
        <name>substrate</name>
    </ligand>
</feature>
<feature type="binding site" evidence="1">
    <location>
        <position position="122"/>
    </location>
    <ligand>
        <name>Mg(2+)</name>
        <dbReference type="ChEBI" id="CHEBI:18420"/>
        <label>2</label>
    </ligand>
</feature>
<feature type="binding site" evidence="1">
    <location>
        <position position="253"/>
    </location>
    <ligand>
        <name>substrate</name>
    </ligand>
</feature>
<feature type="binding site" evidence="1">
    <location>
        <position position="285"/>
    </location>
    <ligand>
        <name>Mg(2+)</name>
        <dbReference type="ChEBI" id="CHEBI:18420"/>
        <label>2</label>
    </ligand>
</feature>
<feature type="binding site" evidence="1">
    <location>
        <begin position="328"/>
        <end position="330"/>
    </location>
    <ligand>
        <name>substrate</name>
    </ligand>
</feature>
<feature type="binding site" evidence="1">
    <location>
        <position position="516"/>
    </location>
    <ligand>
        <name>ATP</name>
        <dbReference type="ChEBI" id="CHEBI:30616"/>
    </ligand>
</feature>
<feature type="binding site" evidence="1">
    <location>
        <position position="561"/>
    </location>
    <ligand>
        <name>ATP</name>
        <dbReference type="ChEBI" id="CHEBI:30616"/>
    </ligand>
</feature>
<feature type="binding site" evidence="1">
    <location>
        <position position="562"/>
    </location>
    <ligand>
        <name>Mg(2+)</name>
        <dbReference type="ChEBI" id="CHEBI:18420"/>
        <label>1</label>
    </ligand>
</feature>
<feature type="binding site" evidence="1">
    <location>
        <position position="564"/>
    </location>
    <ligand>
        <name>substrate</name>
    </ligand>
</feature>
<proteinExistence type="inferred from homology"/>
<gene>
    <name evidence="1" type="primary">purL</name>
    <name type="ordered locus">Mthe_0099</name>
</gene>
<comment type="function">
    <text evidence="1">Part of the phosphoribosylformylglycinamidine synthase complex involved in the purines biosynthetic pathway. Catalyzes the ATP-dependent conversion of formylglycinamide ribonucleotide (FGAR) and glutamine to yield formylglycinamidine ribonucleotide (FGAM) and glutamate. The FGAM synthase complex is composed of three subunits. PurQ produces an ammonia molecule by converting glutamine to glutamate. PurL transfers the ammonia molecule to FGAR to form FGAM in an ATP-dependent manner. PurS interacts with PurQ and PurL and is thought to assist in the transfer of the ammonia molecule from PurQ to PurL.</text>
</comment>
<comment type="catalytic activity">
    <reaction evidence="1">
        <text>N(2)-formyl-N(1)-(5-phospho-beta-D-ribosyl)glycinamide + L-glutamine + ATP + H2O = 2-formamido-N(1)-(5-O-phospho-beta-D-ribosyl)acetamidine + L-glutamate + ADP + phosphate + H(+)</text>
        <dbReference type="Rhea" id="RHEA:17129"/>
        <dbReference type="ChEBI" id="CHEBI:15377"/>
        <dbReference type="ChEBI" id="CHEBI:15378"/>
        <dbReference type="ChEBI" id="CHEBI:29985"/>
        <dbReference type="ChEBI" id="CHEBI:30616"/>
        <dbReference type="ChEBI" id="CHEBI:43474"/>
        <dbReference type="ChEBI" id="CHEBI:58359"/>
        <dbReference type="ChEBI" id="CHEBI:147286"/>
        <dbReference type="ChEBI" id="CHEBI:147287"/>
        <dbReference type="ChEBI" id="CHEBI:456216"/>
        <dbReference type="EC" id="6.3.5.3"/>
    </reaction>
</comment>
<comment type="pathway">
    <text evidence="1">Purine metabolism; IMP biosynthesis via de novo pathway; 5-amino-1-(5-phospho-D-ribosyl)imidazole from N(2)-formyl-N(1)-(5-phospho-D-ribosyl)glycinamide: step 1/2.</text>
</comment>
<comment type="subunit">
    <text evidence="1">Monomer. Part of the FGAM synthase complex composed of 1 PurL, 1 PurQ and 2 PurS subunits.</text>
</comment>
<comment type="subcellular location">
    <subcellularLocation>
        <location evidence="1">Cytoplasm</location>
    </subcellularLocation>
</comment>
<comment type="similarity">
    <text evidence="1">Belongs to the FGAMS family.</text>
</comment>
<dbReference type="EC" id="6.3.5.3" evidence="1"/>
<dbReference type="EMBL" id="CP000477">
    <property type="protein sequence ID" value="ABK13901.1"/>
    <property type="molecule type" value="Genomic_DNA"/>
</dbReference>
<dbReference type="RefSeq" id="WP_011695300.1">
    <property type="nucleotide sequence ID" value="NC_008553.1"/>
</dbReference>
<dbReference type="SMR" id="A0B5C7"/>
<dbReference type="STRING" id="349307.Mthe_0099"/>
<dbReference type="GeneID" id="4462491"/>
<dbReference type="KEGG" id="mtp:Mthe_0099"/>
<dbReference type="HOGENOM" id="CLU_003100_0_1_2"/>
<dbReference type="OrthoDB" id="8251at2157"/>
<dbReference type="UniPathway" id="UPA00074">
    <property type="reaction ID" value="UER00128"/>
</dbReference>
<dbReference type="Proteomes" id="UP000000674">
    <property type="component" value="Chromosome"/>
</dbReference>
<dbReference type="GO" id="GO:0005737">
    <property type="term" value="C:cytoplasm"/>
    <property type="evidence" value="ECO:0007669"/>
    <property type="project" value="UniProtKB-SubCell"/>
</dbReference>
<dbReference type="GO" id="GO:0005524">
    <property type="term" value="F:ATP binding"/>
    <property type="evidence" value="ECO:0007669"/>
    <property type="project" value="UniProtKB-UniRule"/>
</dbReference>
<dbReference type="GO" id="GO:0000287">
    <property type="term" value="F:magnesium ion binding"/>
    <property type="evidence" value="ECO:0007669"/>
    <property type="project" value="UniProtKB-UniRule"/>
</dbReference>
<dbReference type="GO" id="GO:0004642">
    <property type="term" value="F:phosphoribosylformylglycinamidine synthase activity"/>
    <property type="evidence" value="ECO:0007669"/>
    <property type="project" value="UniProtKB-UniRule"/>
</dbReference>
<dbReference type="GO" id="GO:0006189">
    <property type="term" value="P:'de novo' IMP biosynthetic process"/>
    <property type="evidence" value="ECO:0007669"/>
    <property type="project" value="UniProtKB-UniRule"/>
</dbReference>
<dbReference type="CDD" id="cd02203">
    <property type="entry name" value="PurL_repeat1"/>
    <property type="match status" value="1"/>
</dbReference>
<dbReference type="CDD" id="cd02204">
    <property type="entry name" value="PurL_repeat2"/>
    <property type="match status" value="1"/>
</dbReference>
<dbReference type="Gene3D" id="3.90.650.10">
    <property type="entry name" value="PurM-like C-terminal domain"/>
    <property type="match status" value="2"/>
</dbReference>
<dbReference type="Gene3D" id="3.30.1330.10">
    <property type="entry name" value="PurM-like, N-terminal domain"/>
    <property type="match status" value="2"/>
</dbReference>
<dbReference type="HAMAP" id="MF_00420">
    <property type="entry name" value="PurL_2"/>
    <property type="match status" value="1"/>
</dbReference>
<dbReference type="InterPro" id="IPR010074">
    <property type="entry name" value="PRibForGlyAmidine_synth_PurL"/>
</dbReference>
<dbReference type="InterPro" id="IPR041609">
    <property type="entry name" value="PurL_linker"/>
</dbReference>
<dbReference type="InterPro" id="IPR010918">
    <property type="entry name" value="PurM-like_C_dom"/>
</dbReference>
<dbReference type="InterPro" id="IPR036676">
    <property type="entry name" value="PurM-like_C_sf"/>
</dbReference>
<dbReference type="InterPro" id="IPR016188">
    <property type="entry name" value="PurM-like_N"/>
</dbReference>
<dbReference type="InterPro" id="IPR036921">
    <property type="entry name" value="PurM-like_N_sf"/>
</dbReference>
<dbReference type="NCBIfam" id="TIGR01736">
    <property type="entry name" value="FGAM_synth_II"/>
    <property type="match status" value="1"/>
</dbReference>
<dbReference type="NCBIfam" id="NF002290">
    <property type="entry name" value="PRK01213.1"/>
    <property type="match status" value="1"/>
</dbReference>
<dbReference type="PANTHER" id="PTHR43555">
    <property type="entry name" value="PHOSPHORIBOSYLFORMYLGLYCINAMIDINE SYNTHASE SUBUNIT PURL"/>
    <property type="match status" value="1"/>
</dbReference>
<dbReference type="PANTHER" id="PTHR43555:SF1">
    <property type="entry name" value="PHOSPHORIBOSYLFORMYLGLYCINAMIDINE SYNTHASE SUBUNIT PURL"/>
    <property type="match status" value="1"/>
</dbReference>
<dbReference type="Pfam" id="PF00586">
    <property type="entry name" value="AIRS"/>
    <property type="match status" value="2"/>
</dbReference>
<dbReference type="Pfam" id="PF02769">
    <property type="entry name" value="AIRS_C"/>
    <property type="match status" value="2"/>
</dbReference>
<dbReference type="Pfam" id="PF18072">
    <property type="entry name" value="FGAR-AT_linker"/>
    <property type="match status" value="1"/>
</dbReference>
<dbReference type="PIRSF" id="PIRSF001587">
    <property type="entry name" value="FGAM_synthase_II"/>
    <property type="match status" value="1"/>
</dbReference>
<dbReference type="SUPFAM" id="SSF109736">
    <property type="entry name" value="FGAM synthase PurL, linker domain"/>
    <property type="match status" value="1"/>
</dbReference>
<dbReference type="SUPFAM" id="SSF56042">
    <property type="entry name" value="PurM C-terminal domain-like"/>
    <property type="match status" value="2"/>
</dbReference>
<dbReference type="SUPFAM" id="SSF55326">
    <property type="entry name" value="PurM N-terminal domain-like"/>
    <property type="match status" value="2"/>
</dbReference>
<keyword id="KW-0067">ATP-binding</keyword>
<keyword id="KW-0963">Cytoplasm</keyword>
<keyword id="KW-0436">Ligase</keyword>
<keyword id="KW-0460">Magnesium</keyword>
<keyword id="KW-0479">Metal-binding</keyword>
<keyword id="KW-0547">Nucleotide-binding</keyword>
<keyword id="KW-0658">Purine biosynthesis</keyword>
<keyword id="KW-1185">Reference proteome</keyword>
<name>PURL_METTP</name>
<organism>
    <name type="scientific">Methanothrix thermoacetophila (strain DSM 6194 / JCM 14653 / NBRC 101360 / PT)</name>
    <name type="common">Methanosaeta thermophila</name>
    <dbReference type="NCBI Taxonomy" id="349307"/>
    <lineage>
        <taxon>Archaea</taxon>
        <taxon>Methanobacteriati</taxon>
        <taxon>Methanobacteriota</taxon>
        <taxon>Stenosarchaea group</taxon>
        <taxon>Methanomicrobia</taxon>
        <taxon>Methanotrichales</taxon>
        <taxon>Methanotrichaceae</taxon>
        <taxon>Methanothrix</taxon>
    </lineage>
</organism>
<reference key="1">
    <citation type="submission" date="2006-10" db="EMBL/GenBank/DDBJ databases">
        <title>Complete sequence of Methanosaeta thermophila PT.</title>
        <authorList>
            <consortium name="US DOE Joint Genome Institute"/>
            <person name="Copeland A."/>
            <person name="Lucas S."/>
            <person name="Lapidus A."/>
            <person name="Barry K."/>
            <person name="Detter J.C."/>
            <person name="Glavina del Rio T."/>
            <person name="Hammon N."/>
            <person name="Israni S."/>
            <person name="Pitluck S."/>
            <person name="Chain P."/>
            <person name="Malfatti S."/>
            <person name="Shin M."/>
            <person name="Vergez L."/>
            <person name="Schmutz J."/>
            <person name="Larimer F."/>
            <person name="Land M."/>
            <person name="Hauser L."/>
            <person name="Kyrpides N."/>
            <person name="Kim E."/>
            <person name="Smith K.S."/>
            <person name="Ingram-Smith C."/>
            <person name="Richardson P."/>
        </authorList>
    </citation>
    <scope>NUCLEOTIDE SEQUENCE [LARGE SCALE GENOMIC DNA]</scope>
    <source>
        <strain>DSM 6194 / JCM 14653 / NBRC 101360 / PT</strain>
    </source>
</reference>
<evidence type="ECO:0000255" key="1">
    <source>
        <dbReference type="HAMAP-Rule" id="MF_00420"/>
    </source>
</evidence>
<accession>A0B5C7</accession>